<keyword id="KW-0002">3D-structure</keyword>
<keyword id="KW-0025">Alternative splicing</keyword>
<keyword id="KW-0966">Cell projection</keyword>
<keyword id="KW-0970">Cilium biogenesis/degradation</keyword>
<keyword id="KW-0963">Cytoplasm</keyword>
<keyword id="KW-0206">Cytoskeleton</keyword>
<keyword id="KW-1185">Reference proteome</keyword>
<keyword id="KW-0677">Repeat</keyword>
<dbReference type="EMBL" id="AK172948">
    <property type="protein sequence ID" value="BAD32226.1"/>
    <property type="molecule type" value="Transcribed_RNA"/>
</dbReference>
<dbReference type="EMBL" id="AC159621">
    <property type="status" value="NOT_ANNOTATED_CDS"/>
    <property type="molecule type" value="Genomic_DNA"/>
</dbReference>
<dbReference type="EMBL" id="AC159632">
    <property type="status" value="NOT_ANNOTATED_CDS"/>
    <property type="molecule type" value="Genomic_DNA"/>
</dbReference>
<dbReference type="CCDS" id="CCDS49075.1">
    <molecule id="Q6A070-1"/>
</dbReference>
<dbReference type="RefSeq" id="NP_808473.2">
    <molecule id="Q6A070-1"/>
    <property type="nucleotide sequence ID" value="NM_177805.3"/>
</dbReference>
<dbReference type="PDB" id="5DN7">
    <property type="method" value="X-ray"/>
    <property type="resolution" value="2.20 A"/>
    <property type="chains" value="A=332-620"/>
</dbReference>
<dbReference type="PDBsum" id="5DN7"/>
<dbReference type="SMR" id="Q6A070"/>
<dbReference type="BioGRID" id="236543">
    <property type="interactions" value="2"/>
</dbReference>
<dbReference type="FunCoup" id="Q6A070">
    <property type="interactions" value="1500"/>
</dbReference>
<dbReference type="STRING" id="10090.ENSMUSP00000070382"/>
<dbReference type="GlyGen" id="Q6A070">
    <property type="glycosylation" value="3 sites"/>
</dbReference>
<dbReference type="iPTMnet" id="Q6A070"/>
<dbReference type="PhosphoSitePlus" id="Q6A070"/>
<dbReference type="PaxDb" id="10090-ENSMUSP00000070382"/>
<dbReference type="ProteomicsDB" id="262904">
    <molecule id="Q6A070-1"/>
</dbReference>
<dbReference type="ProteomicsDB" id="262905">
    <molecule id="Q6A070-2"/>
</dbReference>
<dbReference type="Pumba" id="Q6A070"/>
<dbReference type="Antibodypedia" id="23425">
    <property type="antibodies" value="14 antibodies from 7 providers"/>
</dbReference>
<dbReference type="DNASU" id="328108"/>
<dbReference type="Ensembl" id="ENSMUST00000066296.9">
    <molecule id="Q6A070-1"/>
    <property type="protein sequence ID" value="ENSMUSP00000070382.8"/>
    <property type="gene ID" value="ENSMUSG00000035614.12"/>
</dbReference>
<dbReference type="GeneID" id="328108"/>
<dbReference type="KEGG" id="mmu:328108"/>
<dbReference type="UCSC" id="uc007nqs.2">
    <molecule id="Q6A070-1"/>
    <property type="organism name" value="mouse"/>
</dbReference>
<dbReference type="AGR" id="MGI:2684313"/>
<dbReference type="CTD" id="23116"/>
<dbReference type="MGI" id="MGI:2684313">
    <property type="gene designation" value="Togaram1"/>
</dbReference>
<dbReference type="VEuPathDB" id="HostDB:ENSMUSG00000035614"/>
<dbReference type="eggNOG" id="KOG2933">
    <property type="taxonomic scope" value="Eukaryota"/>
</dbReference>
<dbReference type="GeneTree" id="ENSGT00940000158712"/>
<dbReference type="HOGENOM" id="CLU_002584_1_0_1"/>
<dbReference type="InParanoid" id="Q6A070"/>
<dbReference type="OMA" id="DELCHAT"/>
<dbReference type="OrthoDB" id="63891at2759"/>
<dbReference type="PhylomeDB" id="Q6A070"/>
<dbReference type="TreeFam" id="TF315518"/>
<dbReference type="BioGRID-ORCS" id="328108">
    <property type="hits" value="4 hits in 76 CRISPR screens"/>
</dbReference>
<dbReference type="ChiTaRS" id="Togaram1">
    <property type="organism name" value="mouse"/>
</dbReference>
<dbReference type="EvolutionaryTrace" id="Q6A070"/>
<dbReference type="PRO" id="PR:Q6A070"/>
<dbReference type="Proteomes" id="UP000000589">
    <property type="component" value="Chromosome 12"/>
</dbReference>
<dbReference type="RNAct" id="Q6A070">
    <property type="molecule type" value="protein"/>
</dbReference>
<dbReference type="Bgee" id="ENSMUSG00000035614">
    <property type="expression patterns" value="Expressed in otolith organ and 228 other cell types or tissues"/>
</dbReference>
<dbReference type="ExpressionAtlas" id="Q6A070">
    <property type="expression patterns" value="baseline and differential"/>
</dbReference>
<dbReference type="GO" id="GO:0036064">
    <property type="term" value="C:ciliary basal body"/>
    <property type="evidence" value="ECO:0000314"/>
    <property type="project" value="UniProtKB"/>
</dbReference>
<dbReference type="GO" id="GO:0005929">
    <property type="term" value="C:cilium"/>
    <property type="evidence" value="ECO:0000314"/>
    <property type="project" value="UniProtKB"/>
</dbReference>
<dbReference type="GO" id="GO:0005737">
    <property type="term" value="C:cytoplasm"/>
    <property type="evidence" value="ECO:0007669"/>
    <property type="project" value="UniProtKB-KW"/>
</dbReference>
<dbReference type="GO" id="GO:0035082">
    <property type="term" value="P:axoneme assembly"/>
    <property type="evidence" value="ECO:0000250"/>
    <property type="project" value="UniProtKB"/>
</dbReference>
<dbReference type="GO" id="GO:1905515">
    <property type="term" value="P:non-motile cilium assembly"/>
    <property type="evidence" value="ECO:0000250"/>
    <property type="project" value="UniProtKB"/>
</dbReference>
<dbReference type="GO" id="GO:0031116">
    <property type="term" value="P:positive regulation of microtubule polymerization"/>
    <property type="evidence" value="ECO:0000314"/>
    <property type="project" value="UniProtKB"/>
</dbReference>
<dbReference type="DisProt" id="DP02882"/>
<dbReference type="FunFam" id="1.25.10.10:FF:000117">
    <property type="entry name" value="TOG array regulator of axonemal microtubules 1"/>
    <property type="match status" value="1"/>
</dbReference>
<dbReference type="FunFam" id="1.25.10.10:FF:000126">
    <property type="entry name" value="TOG array regulator of axonemal microtubules 1"/>
    <property type="match status" value="1"/>
</dbReference>
<dbReference type="FunFam" id="1.25.10.10:FF:000142">
    <property type="entry name" value="TOG array regulator of axonemal microtubules 1"/>
    <property type="match status" value="1"/>
</dbReference>
<dbReference type="Gene3D" id="1.25.10.10">
    <property type="entry name" value="Leucine-rich Repeat Variant"/>
    <property type="match status" value="4"/>
</dbReference>
<dbReference type="InterPro" id="IPR011989">
    <property type="entry name" value="ARM-like"/>
</dbReference>
<dbReference type="InterPro" id="IPR016024">
    <property type="entry name" value="ARM-type_fold"/>
</dbReference>
<dbReference type="InterPro" id="IPR034085">
    <property type="entry name" value="TOG"/>
</dbReference>
<dbReference type="PANTHER" id="PTHR21567">
    <property type="entry name" value="CLASP"/>
    <property type="match status" value="1"/>
</dbReference>
<dbReference type="PANTHER" id="PTHR21567:SF6">
    <property type="entry name" value="TOG ARRAY REGULATOR OF AXONEMAL MICROTUBULES PROTEIN 1"/>
    <property type="match status" value="1"/>
</dbReference>
<dbReference type="Pfam" id="PF21040">
    <property type="entry name" value="CEP104-like_TOG"/>
    <property type="match status" value="1"/>
</dbReference>
<dbReference type="SMART" id="SM01349">
    <property type="entry name" value="TOG"/>
    <property type="match status" value="3"/>
</dbReference>
<dbReference type="SUPFAM" id="SSF48371">
    <property type="entry name" value="ARM repeat"/>
    <property type="match status" value="3"/>
</dbReference>
<accession>Q6A070</accession>
<accession>F8WJB2</accession>
<protein>
    <recommendedName>
        <fullName>TOG array regulator of axonemal microtubules protein 1</fullName>
    </recommendedName>
    <alternativeName>
        <fullName evidence="8">Crescerin-1</fullName>
    </alternativeName>
    <alternativeName>
        <fullName>Protein FAM179B</fullName>
    </alternativeName>
</protein>
<sequence length="1776" mass="194910">MAAAPSELLPLPPPATPGSYRLLSRCRPYAPGTDGRRSGGTMRGEKNYYCRGAAGDHGSCPATPSPLASTLLLPAEAVSTSWSGPGSGLSGGDEEETRLLQLLRTAPDPSEAFQALQAALPRRGGRLGFPRRKEALYRALGRVLVEGGSEEKRLCLQLLSDVLRGQGEAGQLEEAFSLALLPQLVVSLREDNPALRKDALQILHICLRRSSGQVLRTLIQGLESPDARLRASTALLLPILFTPEDLLQGLDLTEVIISLARKLGDQEMEEESETAFSSLQQIGERLGQERFHSYISRLPSALRRHYNRRLESQYGSQVPYYLELEASGFSEDAAPCVVNLSSSNLKFEIIPQELHARLLDQEDYKNRTQAVEELKQLLGKFNPSSTPHASLVGFISLLYNLLDDSNFKVVHGTLQVLHLLVIRLGEQVQQFLGPVIAASVKVLADNKLVIKQEYMKIFLKLMKEVGPQRVLSLLLENLKHKHSRVREEVVNICICSLLTYPSEDFDLPKLSFDLAPALVDSKRRVRQAALEAFAVLASSMGSGKTNVLFKAVDTVELQDNGDGVMNAVQARLARKTLPRLTEQGFVEYAILMPSSAQGRSSHLAHGADTDWLMSGNRTQSAHCYCGDHTRDSMQLYGSYSPTICTRRVLSAGKGKNKLPWENEQPGVMGENQTSNSKDIKDTEQFSAHDLIPSPKLKPSQGMPASDDLCFSKKRSSRNLFQSSRDFNSESVPTCGAGNTADLQTNLPGKCGQLGLSQIGCRTGSVGSDLQFLGTANGHQDKVYASIDFGSKTQQTFGSQSERTSSYSGSNASPGSFILPSYPLASPRTSPKHTSPLSVAPKKSQDNSISFSNSWPLKSFEGLSKPSPQKKLANQKSSDPTGENFQEKTTAVQLTPALVRSPSSRRGLNGTKPVPPIPRGINLLPDKADLSTMGHMKKQPDDIWKSEKDNLTIDLSELNFRDKDLDQEEMHSSLRSLRNSAAKKRAKLSGSSSTSDVDSPDSAMKLELTIDSPSRASSPNISSYSESGVYSQESLTSSLSTTPQGKRIMSDIFPTFGSKPCSTRLSSAKKTSHAAEQSPSAGFTRSSNLQQISSFDFTSTNTLSEDSVVIVGKGVFGNPNSAPTTCSQPVISSVESEDTFPVKPSIEPPSGVYGRAVQHNAPLYPEVENDKDTKVSIAKSTYEKMRQKRKEEKELLDAKDCERKETNPWERIKHLGSEKMTSENEPSSGVIPQYKERMSSVTHSPEIMDSLELRPFSKPDIALTEALRLLADEDWEKKMEGLNFVRCLAAFHSDLLNTKLHETTFAVVQEVKNLRSGVSRAAVVCLGDLFTYLKKSMDQELDSAVRALLHKAGESNTFIREDVDKALKAMVNNVTPARAVTSLINGGQSHLHIAVRRCTAQHLADVVECMDPERISSGTKDMADRLLPAAAKFAQDSSQETRYYGRKMLFLMMGHPNFEKLLEKYIPSKDLPYIKESVKNLRLKGLGEIPLDTASAKGRRSHPGSVGNTRSSSVSRDAFSSSEREVTEVREVPRKSAPRNSLESAEYIKVITGLLNAKDFRDRINGIKQLLSDTENNQELVVGNIVKIFDAFKSRLHDSNSKVNLVALETMHKMIPLLRDNLSPIINMLIPAIVDNNLNSKNPGIYAAATNVVHALSQHVDNYLLLQPFCTKAQFLNGKAKQDMTEKLADIVTELYQRKPHATEQKVLVVLWHLLGNMTHSGSLPGAGGNIRTATAKLSKALFTQMGQNLLNQAASQPPHIKKSLEELLDVTVLSEL</sequence>
<organism>
    <name type="scientific">Mus musculus</name>
    <name type="common">Mouse</name>
    <dbReference type="NCBI Taxonomy" id="10090"/>
    <lineage>
        <taxon>Eukaryota</taxon>
        <taxon>Metazoa</taxon>
        <taxon>Chordata</taxon>
        <taxon>Craniata</taxon>
        <taxon>Vertebrata</taxon>
        <taxon>Euteleostomi</taxon>
        <taxon>Mammalia</taxon>
        <taxon>Eutheria</taxon>
        <taxon>Euarchontoglires</taxon>
        <taxon>Glires</taxon>
        <taxon>Rodentia</taxon>
        <taxon>Myomorpha</taxon>
        <taxon>Muroidea</taxon>
        <taxon>Muridae</taxon>
        <taxon>Murinae</taxon>
        <taxon>Mus</taxon>
        <taxon>Mus</taxon>
    </lineage>
</organism>
<name>TGRM1_MOUSE</name>
<evidence type="ECO:0000250" key="1">
    <source>
        <dbReference type="UniProtKB" id="Q17423"/>
    </source>
</evidence>
<evidence type="ECO:0000250" key="2">
    <source>
        <dbReference type="UniProtKB" id="Q9Y4F4"/>
    </source>
</evidence>
<evidence type="ECO:0000255" key="3"/>
<evidence type="ECO:0000256" key="4">
    <source>
        <dbReference type="SAM" id="MobiDB-lite"/>
    </source>
</evidence>
<evidence type="ECO:0000269" key="5">
    <source>
    </source>
</evidence>
<evidence type="ECO:0000269" key="6">
    <source>
    </source>
</evidence>
<evidence type="ECO:0000303" key="7">
    <source>
    </source>
</evidence>
<evidence type="ECO:0000303" key="8">
    <source>
    </source>
</evidence>
<evidence type="ECO:0000305" key="9"/>
<evidence type="ECO:0007829" key="10">
    <source>
        <dbReference type="PDB" id="5DN7"/>
    </source>
</evidence>
<proteinExistence type="evidence at protein level"/>
<feature type="chain" id="PRO_0000251953" description="TOG array regulator of axonemal microtubules protein 1">
    <location>
        <begin position="1"/>
        <end position="1776"/>
    </location>
</feature>
<feature type="repeat" description="HEAT 1" evidence="3">
    <location>
        <begin position="175"/>
        <end position="212"/>
    </location>
</feature>
<feature type="repeat" description="HEAT 2" evidence="3">
    <location>
        <begin position="214"/>
        <end position="246"/>
    </location>
</feature>
<feature type="repeat" description="HEAT 3" evidence="3">
    <location>
        <begin position="250"/>
        <end position="288"/>
    </location>
</feature>
<feature type="repeat" description="HEAT 4" evidence="3">
    <location>
        <begin position="344"/>
        <end position="383"/>
    </location>
</feature>
<feature type="repeat" description="HEAT 5" evidence="3">
    <location>
        <begin position="389"/>
        <end position="426"/>
    </location>
</feature>
<feature type="repeat" description="HEAT 6" evidence="3">
    <location>
        <begin position="430"/>
        <end position="465"/>
    </location>
</feature>
<feature type="repeat" description="HEAT 7" evidence="3">
    <location>
        <begin position="466"/>
        <end position="503"/>
    </location>
</feature>
<feature type="repeat" description="HEAT 8" evidence="3">
    <location>
        <begin position="505"/>
        <end position="542"/>
    </location>
</feature>
<feature type="repeat" description="HEAT 9" evidence="3">
    <location>
        <begin position="1297"/>
        <end position="1334"/>
    </location>
</feature>
<feature type="repeat" description="HEAT 10" evidence="3">
    <location>
        <begin position="1338"/>
        <end position="1375"/>
    </location>
</feature>
<feature type="repeat" description="HEAT 11" evidence="3">
    <location>
        <begin position="1541"/>
        <end position="1578"/>
    </location>
</feature>
<feature type="repeat" description="HEAT 12" evidence="3">
    <location>
        <begin position="1582"/>
        <end position="1619"/>
    </location>
</feature>
<feature type="repeat" description="HEAT 13" evidence="3">
    <location>
        <begin position="1623"/>
        <end position="1661"/>
    </location>
</feature>
<feature type="region of interest" description="TOG 1" evidence="8">
    <location>
        <begin position="94"/>
        <end position="311"/>
    </location>
</feature>
<feature type="region of interest" description="TOG 2" evidence="8">
    <location>
        <begin position="351"/>
        <end position="595"/>
    </location>
</feature>
<feature type="region of interest" description="Disordered" evidence="4">
    <location>
        <begin position="655"/>
        <end position="676"/>
    </location>
</feature>
<feature type="region of interest" description="Disordered" evidence="4">
    <location>
        <begin position="817"/>
        <end position="921"/>
    </location>
</feature>
<feature type="region of interest" description="Disordered" evidence="4">
    <location>
        <begin position="970"/>
        <end position="1000"/>
    </location>
</feature>
<feature type="region of interest" description="Disordered" evidence="4">
    <location>
        <begin position="1062"/>
        <end position="1084"/>
    </location>
</feature>
<feature type="region of interest" description="TOG 3" evidence="8">
    <location>
        <begin position="1259"/>
        <end position="1481"/>
    </location>
</feature>
<feature type="region of interest" description="Disordered" evidence="4">
    <location>
        <begin position="1493"/>
        <end position="1536"/>
    </location>
</feature>
<feature type="region of interest" description="TOG 4" evidence="8">
    <location>
        <begin position="1540"/>
        <end position="1776"/>
    </location>
</feature>
<feature type="compositionally biased region" description="Polar residues" evidence="4">
    <location>
        <begin position="826"/>
        <end position="836"/>
    </location>
</feature>
<feature type="compositionally biased region" description="Polar residues" evidence="4">
    <location>
        <begin position="845"/>
        <end position="855"/>
    </location>
</feature>
<feature type="compositionally biased region" description="Polar residues" evidence="4">
    <location>
        <begin position="871"/>
        <end position="892"/>
    </location>
</feature>
<feature type="compositionally biased region" description="Low complexity" evidence="4">
    <location>
        <begin position="988"/>
        <end position="1000"/>
    </location>
</feature>
<feature type="compositionally biased region" description="Low complexity" evidence="4">
    <location>
        <begin position="1509"/>
        <end position="1520"/>
    </location>
</feature>
<feature type="compositionally biased region" description="Basic and acidic residues" evidence="4">
    <location>
        <begin position="1521"/>
        <end position="1533"/>
    </location>
</feature>
<feature type="splice variant" id="VSP_047942" description="In isoform 2." evidence="7">
    <location>
        <begin position="1659"/>
        <end position="1675"/>
    </location>
</feature>
<feature type="mutagenesis site" description="Expected to disrupt microtubule binding. Abolishes the ability to promote microtubule polymerization." evidence="5">
    <original>Y</original>
    <variation>E</variation>
    <location>
        <position position="364"/>
    </location>
</feature>
<feature type="mutagenesis site" description="Resulty in increased tubulin polymerization in vitro." evidence="6">
    <original>R</original>
    <variation>W</variation>
    <location>
        <position position="367"/>
    </location>
</feature>
<feature type="mutagenesis site" description="Abolishes association with microtubules." evidence="5">
    <original>W</original>
    <variation>E</variation>
    <location>
        <position position="1274"/>
    </location>
</feature>
<feature type="mutagenesis site" description="Abolishes association with microtubules and the ability to promote microtubule polymerization." evidence="5">
    <original>F</original>
    <variation>E</variation>
    <location>
        <position position="1559"/>
    </location>
</feature>
<feature type="turn" evidence="10">
    <location>
        <begin position="347"/>
        <end position="349"/>
    </location>
</feature>
<feature type="helix" evidence="10">
    <location>
        <begin position="352"/>
        <end position="359"/>
    </location>
</feature>
<feature type="helix" evidence="10">
    <location>
        <begin position="367"/>
        <end position="379"/>
    </location>
</feature>
<feature type="helix" evidence="10">
    <location>
        <begin position="383"/>
        <end position="385"/>
    </location>
</feature>
<feature type="helix" evidence="10">
    <location>
        <begin position="388"/>
        <end position="401"/>
    </location>
</feature>
<feature type="helix" evidence="10">
    <location>
        <begin position="407"/>
        <end position="424"/>
    </location>
</feature>
<feature type="helix" evidence="10">
    <location>
        <begin position="425"/>
        <end position="431"/>
    </location>
</feature>
<feature type="helix" evidence="10">
    <location>
        <begin position="432"/>
        <end position="441"/>
    </location>
</feature>
<feature type="helix" evidence="10">
    <location>
        <begin position="442"/>
        <end position="444"/>
    </location>
</feature>
<feature type="helix" evidence="10">
    <location>
        <begin position="448"/>
        <end position="465"/>
    </location>
</feature>
<feature type="helix" evidence="10">
    <location>
        <begin position="467"/>
        <end position="475"/>
    </location>
</feature>
<feature type="helix" evidence="10">
    <location>
        <begin position="476"/>
        <end position="479"/>
    </location>
</feature>
<feature type="helix" evidence="10">
    <location>
        <begin position="483"/>
        <end position="499"/>
    </location>
</feature>
<feature type="helix" evidence="10">
    <location>
        <begin position="502"/>
        <end position="504"/>
    </location>
</feature>
<feature type="helix" evidence="10">
    <location>
        <begin position="507"/>
        <end position="514"/>
    </location>
</feature>
<feature type="helix" evidence="10">
    <location>
        <begin position="515"/>
        <end position="519"/>
    </location>
</feature>
<feature type="helix" evidence="10">
    <location>
        <begin position="523"/>
        <end position="540"/>
    </location>
</feature>
<feature type="helix" evidence="10">
    <location>
        <begin position="542"/>
        <end position="544"/>
    </location>
</feature>
<feature type="helix" evidence="10">
    <location>
        <begin position="546"/>
        <end position="553"/>
    </location>
</feature>
<feature type="helix" evidence="10">
    <location>
        <begin position="564"/>
        <end position="573"/>
    </location>
</feature>
<reference key="1">
    <citation type="journal article" date="2004" name="DNA Res.">
        <title>Prediction of the coding sequences of mouse homologues of KIAA gene: IV. The complete nucleotide sequences of 500 mouse KIAA-homologous cDNAs identified by screening of terminal sequences of cDNA clones randomly sampled from size-fractionated libraries.</title>
        <authorList>
            <person name="Okazaki N."/>
            <person name="Kikuno R."/>
            <person name="Ohara R."/>
            <person name="Inamoto S."/>
            <person name="Koseki H."/>
            <person name="Hiraoka S."/>
            <person name="Saga Y."/>
            <person name="Seino S."/>
            <person name="Nishimura M."/>
            <person name="Kaisho T."/>
            <person name="Hoshino K."/>
            <person name="Kitamura H."/>
            <person name="Nagase T."/>
            <person name="Ohara O."/>
            <person name="Koga H."/>
        </authorList>
    </citation>
    <scope>NUCLEOTIDE SEQUENCE [LARGE SCALE MRNA] (ISOFORM 2)</scope>
    <source>
        <tissue>Brain</tissue>
    </source>
</reference>
<reference key="2">
    <citation type="journal article" date="2009" name="PLoS Biol.">
        <title>Lineage-specific biology revealed by a finished genome assembly of the mouse.</title>
        <authorList>
            <person name="Church D.M."/>
            <person name="Goodstadt L."/>
            <person name="Hillier L.W."/>
            <person name="Zody M.C."/>
            <person name="Goldstein S."/>
            <person name="She X."/>
            <person name="Bult C.J."/>
            <person name="Agarwala R."/>
            <person name="Cherry J.L."/>
            <person name="DiCuccio M."/>
            <person name="Hlavina W."/>
            <person name="Kapustin Y."/>
            <person name="Meric P."/>
            <person name="Maglott D."/>
            <person name="Birtle Z."/>
            <person name="Marques A.C."/>
            <person name="Graves T."/>
            <person name="Zhou S."/>
            <person name="Teague B."/>
            <person name="Potamousis K."/>
            <person name="Churas C."/>
            <person name="Place M."/>
            <person name="Herschleb J."/>
            <person name="Runnheim R."/>
            <person name="Forrest D."/>
            <person name="Amos-Landgraf J."/>
            <person name="Schwartz D.C."/>
            <person name="Cheng Z."/>
            <person name="Lindblad-Toh K."/>
            <person name="Eichler E.E."/>
            <person name="Ponting C.P."/>
        </authorList>
    </citation>
    <scope>NUCLEOTIDE SEQUENCE [LARGE SCALE GENOMIC DNA]</scope>
    <source>
        <strain>C57BL/6J</strain>
    </source>
</reference>
<reference key="3">
    <citation type="journal article" date="2021" name="J. Med. Genet.">
        <title>Biallelic mutations in the TOGARAM1 gene cause a novel primary ciliopathy.</title>
        <authorList>
            <person name="Morbidoni V."/>
            <person name="Agolini E."/>
            <person name="Slep K.C."/>
            <person name="Pannone L."/>
            <person name="Zuccarello D."/>
            <person name="Cassina M."/>
            <person name="Grosso E."/>
            <person name="Gai G."/>
            <person name="Salviati L."/>
            <person name="Dallapiccola B."/>
            <person name="Novelli A."/>
            <person name="Martinelli S."/>
            <person name="Trevisson E."/>
        </authorList>
    </citation>
    <scope>MUTAGENESIS OF ARG-367</scope>
    <scope>FUNCTION</scope>
</reference>
<reference key="4">
    <citation type="journal article" date="2015" name="Mol. Biol. Cell">
        <title>Crescerin uses a TOG domain array to regulate microtubules in the primary cilium.</title>
        <authorList>
            <person name="Das A."/>
            <person name="Dickinson D.J."/>
            <person name="Wood C.C."/>
            <person name="Goldstein B."/>
            <person name="Slep K.C."/>
        </authorList>
    </citation>
    <scope>X-RAY CRYSTALLOGRAPHY (2.20 ANGSTROMS) OF 332-620</scope>
    <scope>SUBCELLULAR LOCATION</scope>
    <scope>DOMAIN</scope>
    <scope>MUTAGENESIS OF TYR-364; TRP-1274 AND PHE-1559</scope>
</reference>
<comment type="function">
    <text evidence="1 5 6">Involved in ciliogenesis. It is required for appropriate acetylation and polyglutamylation of ciliary microtubules, and regulation of cilium length (By similarity). Interacts with microtubules and promotes microtubule polymerization via its HEAT repeat domains, especially those in TOG region 2 and 4 (PubMed:26378256, PubMed:32747439).</text>
</comment>
<comment type="subunit">
    <text evidence="2">Interacts with ARMC9. Interacts with CCDC66, CEP104 and CSPP1.</text>
</comment>
<comment type="subcellular location">
    <subcellularLocation>
        <location evidence="5">Cell projection</location>
        <location evidence="5">Cilium</location>
    </subcellularLocation>
    <subcellularLocation>
        <location evidence="5">Cytoplasm</location>
        <location evidence="5">Cytoskeleton</location>
    </subcellularLocation>
    <subcellularLocation>
        <location evidence="2">Cytoplasm</location>
        <location evidence="2">Cytoskeleton</location>
        <location evidence="2">Cilium axoneme</location>
    </subcellularLocation>
    <text evidence="5">Detected along the length of primary cilia and at the basal body. Colocalization with the cytoplasmic microtubule cytoskeleton upon heterologous expression is most likely an artifact.</text>
</comment>
<comment type="alternative products">
    <event type="alternative splicing"/>
    <isoform>
        <id>Q6A070-1</id>
        <name>1</name>
        <sequence type="displayed"/>
    </isoform>
    <isoform>
        <id>Q6A070-2</id>
        <name>2</name>
        <sequence type="described" ref="VSP_047942"/>
    </isoform>
</comment>
<comment type="domain">
    <text evidence="5">The TOG regions are composed of HEAT-type repeats that assemble into a solenoid structure. They mediate interaction with microtubules.</text>
</comment>
<comment type="similarity">
    <text evidence="9">Belongs to the Crescerin family.</text>
</comment>
<gene>
    <name type="primary">Togaram1</name>
    <name type="synonym">Fam179b</name>
    <name type="synonym">Kiaa0423</name>
</gene>